<name>MAND_NOVAD</name>
<accession>A4XF23</accession>
<feature type="chain" id="PRO_0000429873" description="D-mannonate dehydratase">
    <location>
        <begin position="1"/>
        <end position="402"/>
    </location>
</feature>
<feature type="active site" description="Proton donor/acceptor" evidence="4">
    <location>
        <position position="159"/>
    </location>
</feature>
<feature type="active site" description="Proton donor/acceptor" evidence="4">
    <location>
        <position position="212"/>
    </location>
</feature>
<feature type="binding site">
    <location>
        <position position="37"/>
    </location>
    <ligand>
        <name>substrate</name>
    </ligand>
</feature>
<feature type="binding site">
    <location>
        <position position="122"/>
    </location>
    <ligand>
        <name>substrate</name>
    </ligand>
</feature>
<feature type="binding site" evidence="1">
    <location>
        <position position="210"/>
    </location>
    <ligand>
        <name>Mg(2+)</name>
        <dbReference type="ChEBI" id="CHEBI:18420"/>
    </ligand>
</feature>
<feature type="binding site" evidence="1">
    <location>
        <position position="236"/>
    </location>
    <ligand>
        <name>Mg(2+)</name>
        <dbReference type="ChEBI" id="CHEBI:18420"/>
    </ligand>
</feature>
<feature type="binding site" evidence="1">
    <location>
        <position position="262"/>
    </location>
    <ligand>
        <name>Mg(2+)</name>
        <dbReference type="ChEBI" id="CHEBI:18420"/>
    </ligand>
</feature>
<feature type="binding site">
    <location>
        <position position="262"/>
    </location>
    <ligand>
        <name>substrate</name>
    </ligand>
</feature>
<feature type="binding site">
    <location>
        <position position="283"/>
    </location>
    <ligand>
        <name>substrate</name>
    </ligand>
</feature>
<feature type="binding site">
    <location>
        <position position="312"/>
    </location>
    <ligand>
        <name>substrate</name>
    </ligand>
</feature>
<feature type="binding site">
    <location>
        <position position="316"/>
    </location>
    <ligand>
        <name>substrate</name>
    </ligand>
</feature>
<feature type="binding site">
    <location>
        <position position="339"/>
    </location>
    <ligand>
        <name>substrate</name>
    </ligand>
</feature>
<feature type="site" description="Important for activity and substrate specificity; Ala is observed in family members with high D-mannonate dehydratase activity that have no activity with D-gluconate">
    <location>
        <position position="314"/>
    </location>
</feature>
<feature type="mutagenesis site" description="Abolishes catalytic activity." evidence="1">
    <original>R</original>
    <variation>A</variation>
    <location>
        <position position="147"/>
    </location>
</feature>
<feature type="mutagenesis site" description="Decreases catalytic activity." evidence="1">
    <original>R</original>
    <variation>K</variation>
    <location>
        <position position="147"/>
    </location>
</feature>
<feature type="mutagenesis site" description="Abolishes catalytic activity." evidence="1">
    <original>Y</original>
    <variation>F</variation>
    <location>
        <position position="159"/>
    </location>
</feature>
<feature type="mutagenesis site" description="Abolishes catalytic activity." evidence="2">
    <original>VGRGKLYYE</original>
    <variation>AGAGGAGAG</variation>
    <location>
        <begin position="161"/>
        <end position="169"/>
    </location>
</feature>
<feature type="mutagenesis site" description="Abolishes catalytic activity." evidence="1">
    <original>H</original>
    <variation>N</variation>
    <location>
        <position position="212"/>
    </location>
</feature>
<feature type="mutagenesis site" description="No effect on catalytic activity." evidence="1">
    <original>K</original>
    <variation>E</variation>
    <location>
        <position position="271"/>
    </location>
</feature>
<feature type="mutagenesis site" description="Abolishes catalytic activity." evidence="1">
    <original>R</original>
    <variation>A</variation>
    <location>
        <position position="283"/>
    </location>
</feature>
<feature type="mutagenesis site" description="Abolishes catalytic activity." evidence="1">
    <original>H</original>
    <variation>N</variation>
    <location>
        <position position="312"/>
    </location>
</feature>
<feature type="mutagenesis site" description="Decreases catalytic activity." evidence="2">
    <original>A</original>
    <variation>P</variation>
    <location>
        <position position="314"/>
    </location>
</feature>
<feature type="mutagenesis site" description="Abolishes catalytic activity." evidence="1">
    <original>E</original>
    <variation>Q</variation>
    <location>
        <position position="339"/>
    </location>
</feature>
<feature type="strand" evidence="7">
    <location>
        <begin position="3"/>
        <end position="11"/>
    </location>
</feature>
<feature type="strand" evidence="7">
    <location>
        <begin position="13"/>
        <end position="15"/>
    </location>
</feature>
<feature type="strand" evidence="7">
    <location>
        <begin position="17"/>
        <end position="27"/>
    </location>
</feature>
<feature type="strand" evidence="7">
    <location>
        <begin position="29"/>
        <end position="33"/>
    </location>
</feature>
<feature type="helix" evidence="7">
    <location>
        <begin position="40"/>
        <end position="49"/>
    </location>
</feature>
<feature type="helix" evidence="7">
    <location>
        <begin position="51"/>
        <end position="55"/>
    </location>
</feature>
<feature type="helix" evidence="7">
    <location>
        <begin position="63"/>
        <end position="73"/>
    </location>
</feature>
<feature type="helix" evidence="7">
    <location>
        <begin position="80"/>
        <end position="101"/>
    </location>
</feature>
<feature type="helix" evidence="7">
    <location>
        <begin position="105"/>
        <end position="109"/>
    </location>
</feature>
<feature type="strand" evidence="7">
    <location>
        <begin position="115"/>
        <end position="127"/>
    </location>
</feature>
<feature type="helix" evidence="7">
    <location>
        <begin position="128"/>
        <end position="140"/>
    </location>
</feature>
<feature type="strand" evidence="7">
    <location>
        <begin position="144"/>
        <end position="150"/>
    </location>
</feature>
<feature type="strand" evidence="5">
    <location>
        <begin position="173"/>
        <end position="175"/>
    </location>
</feature>
<feature type="strand" evidence="7">
    <location>
        <begin position="178"/>
        <end position="181"/>
    </location>
</feature>
<feature type="helix" evidence="7">
    <location>
        <begin position="183"/>
        <end position="187"/>
    </location>
</feature>
<feature type="helix" evidence="7">
    <location>
        <begin position="190"/>
        <end position="201"/>
    </location>
</feature>
<feature type="strand" evidence="7">
    <location>
        <begin position="203"/>
        <end position="210"/>
    </location>
</feature>
<feature type="helix" evidence="7">
    <location>
        <begin position="217"/>
        <end position="227"/>
    </location>
</feature>
<feature type="helix" evidence="7">
    <location>
        <begin position="228"/>
        <end position="230"/>
    </location>
</feature>
<feature type="strand" evidence="7">
    <location>
        <begin position="233"/>
        <end position="237"/>
    </location>
</feature>
<feature type="helix" evidence="7">
    <location>
        <begin position="244"/>
        <end position="247"/>
    </location>
</feature>
<feature type="helix" evidence="7">
    <location>
        <begin position="248"/>
        <end position="253"/>
    </location>
</feature>
<feature type="strand" evidence="7">
    <location>
        <begin position="258"/>
        <end position="260"/>
    </location>
</feature>
<feature type="helix" evidence="7">
    <location>
        <begin position="267"/>
        <end position="269"/>
    </location>
</feature>
<feature type="helix" evidence="7">
    <location>
        <begin position="271"/>
        <end position="275"/>
    </location>
</feature>
<feature type="strand" evidence="7">
    <location>
        <begin position="280"/>
        <end position="282"/>
    </location>
</feature>
<feature type="turn" evidence="7">
    <location>
        <begin position="286"/>
        <end position="290"/>
    </location>
</feature>
<feature type="helix" evidence="7">
    <location>
        <begin position="291"/>
        <end position="304"/>
    </location>
</feature>
<feature type="strand" evidence="6">
    <location>
        <begin position="308"/>
        <end position="311"/>
    </location>
</feature>
<feature type="helix" evidence="7">
    <location>
        <begin position="319"/>
        <end position="331"/>
    </location>
</feature>
<feature type="strand" evidence="6">
    <location>
        <begin position="335"/>
        <end position="339"/>
    </location>
</feature>
<feature type="helix" evidence="7">
    <location>
        <begin position="345"/>
        <end position="350"/>
    </location>
</feature>
<feature type="strand" evidence="7">
    <location>
        <begin position="353"/>
        <end position="358"/>
    </location>
</feature>
<feature type="strand" evidence="7">
    <location>
        <begin position="361"/>
        <end position="364"/>
    </location>
</feature>
<feature type="strand" evidence="7">
    <location>
        <begin position="368"/>
        <end position="372"/>
    </location>
</feature>
<feature type="helix" evidence="7">
    <location>
        <begin position="376"/>
        <end position="379"/>
    </location>
</feature>
<feature type="strand" evidence="7">
    <location>
        <begin position="391"/>
        <end position="394"/>
    </location>
</feature>
<dbReference type="EC" id="4.2.1.8"/>
<dbReference type="EMBL" id="CP000677">
    <property type="protein sequence ID" value="ABP64534.1"/>
    <property type="molecule type" value="Genomic_DNA"/>
</dbReference>
<dbReference type="RefSeq" id="WP_011906920.1">
    <property type="nucleotide sequence ID" value="NC_009427.1"/>
</dbReference>
<dbReference type="PDB" id="2QJJ">
    <property type="method" value="X-ray"/>
    <property type="resolution" value="1.80 A"/>
    <property type="chains" value="A/B/C/D=1-402"/>
</dbReference>
<dbReference type="PDB" id="2QJM">
    <property type="method" value="X-ray"/>
    <property type="resolution" value="2.20 A"/>
    <property type="chains" value="A/B/C/D=1-402"/>
</dbReference>
<dbReference type="PDB" id="2QJN">
    <property type="method" value="X-ray"/>
    <property type="resolution" value="2.00 A"/>
    <property type="chains" value="A/B/C/D=1-402"/>
</dbReference>
<dbReference type="PDB" id="4K1W">
    <property type="method" value="X-ray"/>
    <property type="resolution" value="1.65 A"/>
    <property type="chains" value="A/B/C/D=1-402"/>
</dbReference>
<dbReference type="PDB" id="4K8G">
    <property type="method" value="X-ray"/>
    <property type="resolution" value="1.25 A"/>
    <property type="chains" value="A=1-402"/>
</dbReference>
<dbReference type="PDBsum" id="2QJJ"/>
<dbReference type="PDBsum" id="2QJM"/>
<dbReference type="PDBsum" id="2QJN"/>
<dbReference type="PDBsum" id="4K1W"/>
<dbReference type="PDBsum" id="4K8G"/>
<dbReference type="SMR" id="A4XF23"/>
<dbReference type="KEGG" id="nar:Saro_3675"/>
<dbReference type="eggNOG" id="COG4948">
    <property type="taxonomic scope" value="Bacteria"/>
</dbReference>
<dbReference type="HOGENOM" id="CLU_030273_6_1_5"/>
<dbReference type="UniPathway" id="UPA00246"/>
<dbReference type="EvolutionaryTrace" id="A4XF23"/>
<dbReference type="Proteomes" id="UP000009134">
    <property type="component" value="Plasmid pNL2"/>
</dbReference>
<dbReference type="GO" id="GO:0000287">
    <property type="term" value="F:magnesium ion binding"/>
    <property type="evidence" value="ECO:0000314"/>
    <property type="project" value="UniProtKB"/>
</dbReference>
<dbReference type="GO" id="GO:0008927">
    <property type="term" value="F:mannonate dehydratase activity"/>
    <property type="evidence" value="ECO:0000314"/>
    <property type="project" value="UniProtKB"/>
</dbReference>
<dbReference type="GO" id="GO:0009063">
    <property type="term" value="P:amino acid catabolic process"/>
    <property type="evidence" value="ECO:0007669"/>
    <property type="project" value="InterPro"/>
</dbReference>
<dbReference type="GO" id="GO:0016052">
    <property type="term" value="P:carbohydrate catabolic process"/>
    <property type="evidence" value="ECO:0000314"/>
    <property type="project" value="UniProtKB"/>
</dbReference>
<dbReference type="CDD" id="cd03322">
    <property type="entry name" value="RspA"/>
    <property type="match status" value="1"/>
</dbReference>
<dbReference type="FunFam" id="3.20.20.120:FF:000004">
    <property type="entry name" value="D-galactonate dehydratase family protein"/>
    <property type="match status" value="1"/>
</dbReference>
<dbReference type="FunFam" id="3.30.390.10:FF:000002">
    <property type="entry name" value="D-galactonate dehydratase family protein"/>
    <property type="match status" value="1"/>
</dbReference>
<dbReference type="Gene3D" id="3.20.20.120">
    <property type="entry name" value="Enolase-like C-terminal domain"/>
    <property type="match status" value="1"/>
</dbReference>
<dbReference type="Gene3D" id="3.30.390.10">
    <property type="entry name" value="Enolase-like, N-terminal domain"/>
    <property type="match status" value="1"/>
</dbReference>
<dbReference type="InterPro" id="IPR034589">
    <property type="entry name" value="D-mannonate_dehydratase-like"/>
</dbReference>
<dbReference type="InterPro" id="IPR053379">
    <property type="entry name" value="D-mannonate_dehydratase_GalD"/>
</dbReference>
<dbReference type="InterPro" id="IPR034593">
    <property type="entry name" value="DgoD-like"/>
</dbReference>
<dbReference type="InterPro" id="IPR036849">
    <property type="entry name" value="Enolase-like_C_sf"/>
</dbReference>
<dbReference type="InterPro" id="IPR029017">
    <property type="entry name" value="Enolase-like_N"/>
</dbReference>
<dbReference type="InterPro" id="IPR029065">
    <property type="entry name" value="Enolase_C-like"/>
</dbReference>
<dbReference type="InterPro" id="IPR034587">
    <property type="entry name" value="MAND"/>
</dbReference>
<dbReference type="InterPro" id="IPR018110">
    <property type="entry name" value="Mandel_Rmase/mucon_lact_enz_CS"/>
</dbReference>
<dbReference type="InterPro" id="IPR013342">
    <property type="entry name" value="Mandelate_racemase_C"/>
</dbReference>
<dbReference type="InterPro" id="IPR013341">
    <property type="entry name" value="Mandelate_racemase_N_dom"/>
</dbReference>
<dbReference type="NCBIfam" id="NF043051">
    <property type="entry name" value="ManoateDhtManD"/>
    <property type="match status" value="1"/>
</dbReference>
<dbReference type="NCBIfam" id="NF011654">
    <property type="entry name" value="PRK15072.1"/>
    <property type="match status" value="1"/>
</dbReference>
<dbReference type="PANTHER" id="PTHR48080">
    <property type="entry name" value="D-GALACTONATE DEHYDRATASE-RELATED"/>
    <property type="match status" value="1"/>
</dbReference>
<dbReference type="PANTHER" id="PTHR48080:SF6">
    <property type="entry name" value="STARVATION-SENSING PROTEIN RSPA"/>
    <property type="match status" value="1"/>
</dbReference>
<dbReference type="Pfam" id="PF13378">
    <property type="entry name" value="MR_MLE_C"/>
    <property type="match status" value="1"/>
</dbReference>
<dbReference type="Pfam" id="PF02746">
    <property type="entry name" value="MR_MLE_N"/>
    <property type="match status" value="1"/>
</dbReference>
<dbReference type="SFLD" id="SFLDF00001">
    <property type="entry name" value="mannonate_dehydratase"/>
    <property type="match status" value="1"/>
</dbReference>
<dbReference type="SFLD" id="SFLDG00033">
    <property type="entry name" value="mannonate_dehydratase"/>
    <property type="match status" value="1"/>
</dbReference>
<dbReference type="SMART" id="SM00922">
    <property type="entry name" value="MR_MLE"/>
    <property type="match status" value="1"/>
</dbReference>
<dbReference type="SUPFAM" id="SSF51604">
    <property type="entry name" value="Enolase C-terminal domain-like"/>
    <property type="match status" value="1"/>
</dbReference>
<dbReference type="SUPFAM" id="SSF54826">
    <property type="entry name" value="Enolase N-terminal domain-like"/>
    <property type="match status" value="1"/>
</dbReference>
<dbReference type="PROSITE" id="PS00908">
    <property type="entry name" value="MR_MLE_1"/>
    <property type="match status" value="1"/>
</dbReference>
<gene>
    <name type="primary">manD</name>
    <name type="ordered locus">Saro_3675</name>
</gene>
<keyword id="KW-0002">3D-structure</keyword>
<keyword id="KW-0119">Carbohydrate metabolism</keyword>
<keyword id="KW-0456">Lyase</keyword>
<keyword id="KW-0460">Magnesium</keyword>
<keyword id="KW-0479">Metal-binding</keyword>
<keyword id="KW-0614">Plasmid</keyword>
<keyword id="KW-1185">Reference proteome</keyword>
<sequence length="402" mass="45244">MKITAARVIITCPGRNFVTLKIETDQGVYGIGDATLNGRELSVVAYLQEHVAPCLIGMDPRRIEDIWQYVYRGAYWRRGPVTMRAIAAVDMALWDIKAKMAGMPLYQLLGGRSRDGIMVYGHANGSDIAETVEAVGHYIDMGYKAIRAQTGVPGIKDAYGVGRGKLYYEPADASLPSVTGWDTRKALNYVPKLFEELRKTYGFDHHLLHDGHHRYTPQEAANLGKMLEPYQLFWLEDCTPAENQEAFRLVRQHTVTPLAVGEIFNTIWDAKDLIQNQLIDYIRATVVGAGGLTHLRRIADLASLYQVRTGCHGATDLSPVTMGCALHFDTWVPNFGIQEYMRHTEETDAVFPHDYWFEKGELFVGETPGHGVDIDEELAAKYPYKPAYLPVARLEDGTMWNW</sequence>
<evidence type="ECO:0000269" key="1">
    <source>
    </source>
</evidence>
<evidence type="ECO:0000269" key="2">
    <source>
    </source>
</evidence>
<evidence type="ECO:0000305" key="3"/>
<evidence type="ECO:0000305" key="4">
    <source>
    </source>
</evidence>
<evidence type="ECO:0007829" key="5">
    <source>
        <dbReference type="PDB" id="2QJJ"/>
    </source>
</evidence>
<evidence type="ECO:0007829" key="6">
    <source>
        <dbReference type="PDB" id="4K1W"/>
    </source>
</evidence>
<evidence type="ECO:0007829" key="7">
    <source>
        <dbReference type="PDB" id="4K8G"/>
    </source>
</evidence>
<organism>
    <name type="scientific">Novosphingobium aromaticivorans (strain ATCC 700278 / DSM 12444 / CCUG 56034 / CIP 105152 / NBRC 16084 / F199)</name>
    <dbReference type="NCBI Taxonomy" id="279238"/>
    <lineage>
        <taxon>Bacteria</taxon>
        <taxon>Pseudomonadati</taxon>
        <taxon>Pseudomonadota</taxon>
        <taxon>Alphaproteobacteria</taxon>
        <taxon>Sphingomonadales</taxon>
        <taxon>Sphingomonadaceae</taxon>
        <taxon>Novosphingobium</taxon>
    </lineage>
</organism>
<comment type="function">
    <text evidence="1 2">Catalyzes the dehydration of D-mannonate. Has no detectable activity with a panel of 70 other acid sugars (in vitro).</text>
</comment>
<comment type="catalytic activity">
    <reaction evidence="1 2">
        <text>D-mannonate = 2-dehydro-3-deoxy-D-gluconate + H2O</text>
        <dbReference type="Rhea" id="RHEA:20097"/>
        <dbReference type="ChEBI" id="CHEBI:15377"/>
        <dbReference type="ChEBI" id="CHEBI:17767"/>
        <dbReference type="ChEBI" id="CHEBI:57990"/>
        <dbReference type="EC" id="4.2.1.8"/>
    </reaction>
</comment>
<comment type="cofactor">
    <cofactor evidence="1 2">
        <name>Mg(2+)</name>
        <dbReference type="ChEBI" id="CHEBI:18420"/>
    </cofactor>
    <text evidence="1 2">Binds 1 Mg(2+) ion per subunit.</text>
</comment>
<comment type="biophysicochemical properties">
    <kinetics>
        <text evidence="1 2">kcat is 1.3 sec(-1) with D-mannonate.</text>
    </kinetics>
</comment>
<comment type="pathway">
    <text>Carbohydrate metabolism; pentose and glucuronate interconversion.</text>
</comment>
<comment type="subunit">
    <text evidence="1">Homotetramer.</text>
</comment>
<comment type="similarity">
    <text evidence="3">Belongs to the mandelate racemase/muconate lactonizing enzyme family. GalD subfamily.</text>
</comment>
<geneLocation type="plasmid">
    <name>pNL2</name>
</geneLocation>
<protein>
    <recommendedName>
        <fullName>D-mannonate dehydratase</fullName>
        <shortName>ManD</shortName>
        <ecNumber>4.2.1.8</ecNumber>
    </recommendedName>
    <alternativeName>
        <fullName>RspA homolog</fullName>
    </alternativeName>
</protein>
<proteinExistence type="evidence at protein level"/>
<reference key="1">
    <citation type="submission" date="2007-04" db="EMBL/GenBank/DDBJ databases">
        <title>Complete sequence of plasmid pNL2 of Novosphingobium aromaticivorans DSM 12444.</title>
        <authorList>
            <consortium name="US DOE Joint Genome Institute"/>
            <person name="Copeland A."/>
            <person name="Lucas S."/>
            <person name="Lapidus A."/>
            <person name="Barry K."/>
            <person name="Detter J.C."/>
            <person name="Glavina del Rio T."/>
            <person name="Hammon N."/>
            <person name="Israni S."/>
            <person name="Dalin E."/>
            <person name="Tice H."/>
            <person name="Pitluck S."/>
            <person name="Chertkov O."/>
            <person name="Han C."/>
            <person name="Thomson S."/>
            <person name="Schmutz J."/>
            <person name="Larimer F."/>
            <person name="Land M."/>
            <person name="Kyrpides N."/>
            <person name="Ivanova N."/>
            <person name="Fredrickson J."/>
            <person name="Romine M.F."/>
            <person name="Richardson P."/>
        </authorList>
    </citation>
    <scope>NUCLEOTIDE SEQUENCE [LARGE SCALE GENOMIC DNA]</scope>
    <source>
        <strain>ATCC 700278 / DSM 12444 / CCUG 56034 / CIP 105152 / NBRC 16084 / F199</strain>
        <plasmid>pNL2</plasmid>
    </source>
</reference>
<reference key="2">
    <citation type="journal article" date="2007" name="Biochemistry">
        <title>Evolution of enzymatic activities in the enolase superfamily: D-Mannonate dehydratase from Novosphingobium aromaticivorans.</title>
        <authorList>
            <person name="Rakus J.F."/>
            <person name="Fedorov A.A."/>
            <person name="Fedorov E.V."/>
            <person name="Glasner M.E."/>
            <person name="Vick J.E."/>
            <person name="Babbitt P.C."/>
            <person name="Almo S.C."/>
            <person name="Gerlt J.A."/>
        </authorList>
    </citation>
    <scope>X-RAY CRYSTALLOGRAPHY (1.80 ANGSTROMS) IN COMPLEX WITH D-MANNONIC ACID AND MAGNESIUM</scope>
    <scope>FUNCTION</scope>
    <scope>CATALYTIC ACTIVITY</scope>
    <scope>BIOPHYSICOCHEMICAL PROPERTIES</scope>
    <scope>COFACTOR</scope>
    <scope>SUBUNIT</scope>
    <scope>ACTIVE SITE</scope>
    <scope>MUTAGENESIS OF ARG-147; TYR-159; HIS-212; LYS-271; ARG-283; HIS-312 AND GLU-339</scope>
    <source>
        <strain>ATCC 700278 / DSM 12444 / CCUG 56034 / CIP 105152 / NBRC 16084 / F199</strain>
    </source>
</reference>
<reference key="3">
    <citation type="journal article" date="2014" name="Biochemistry">
        <title>Discovery of function in the enolase superfamily: D-mannonate and D-gluconate dehydratases in the D-mannonate dehydratase subgroup.</title>
        <authorList>
            <person name="Wichelecki D.J."/>
            <person name="Balthazor B.M."/>
            <person name="Chau A.C."/>
            <person name="Vetting M.W."/>
            <person name="Fedorov A.A."/>
            <person name="Fedorov E.V."/>
            <person name="Lukk T."/>
            <person name="Patskovsky Y.V."/>
            <person name="Stead M.B."/>
            <person name="Hillerich B.S."/>
            <person name="Seidel R.D."/>
            <person name="Almo S.C."/>
            <person name="Gerlt J.A."/>
        </authorList>
    </citation>
    <scope>X-RAY CRYSTALLOGRAPHY (1.25 ANGSTROMS) IN COMPLEX D-MANNONIC ACID AND MAGNESIUM</scope>
    <scope>FUNCTION</scope>
    <scope>CATALYTIC ACTIVITY</scope>
    <scope>COFACTOR</scope>
    <scope>BIOPHYSICOCHEMICAL PROPERTIES</scope>
    <scope>MUTAGENESIS OF 161-VAL--GLU-169 AND ALA-314</scope>
    <source>
        <strain>ATCC 700278 / DSM 12444 / CCUG 56034 / CIP 105152 / NBRC 16084 / F199</strain>
    </source>
</reference>